<protein>
    <recommendedName>
        <fullName evidence="1">Ribulose bisphosphate carboxylase large chain</fullName>
        <shortName evidence="1">RuBisCO large subunit</shortName>
        <ecNumber evidence="1">4.1.1.39</ecNumber>
    </recommendedName>
</protein>
<dbReference type="EC" id="4.1.1.39" evidence="1"/>
<dbReference type="EMBL" id="AB295938">
    <property type="protein sequence ID" value="BAF64887.1"/>
    <property type="molecule type" value="Genomic_DNA"/>
</dbReference>
<dbReference type="EMBL" id="AP009569">
    <property type="protein sequence ID" value="BAH11285.1"/>
    <property type="molecule type" value="Genomic_DNA"/>
</dbReference>
<dbReference type="RefSeq" id="YP_002519774.1">
    <property type="nucleotide sequence ID" value="NC_011942.1"/>
</dbReference>
<dbReference type="SMR" id="A6BM42"/>
<dbReference type="GeneID" id="7368151"/>
<dbReference type="GO" id="GO:0009507">
    <property type="term" value="C:chloroplast"/>
    <property type="evidence" value="ECO:0007669"/>
    <property type="project" value="UniProtKB-SubCell"/>
</dbReference>
<dbReference type="GO" id="GO:0000287">
    <property type="term" value="F:magnesium ion binding"/>
    <property type="evidence" value="ECO:0007669"/>
    <property type="project" value="UniProtKB-UniRule"/>
</dbReference>
<dbReference type="GO" id="GO:0004497">
    <property type="term" value="F:monooxygenase activity"/>
    <property type="evidence" value="ECO:0007669"/>
    <property type="project" value="UniProtKB-KW"/>
</dbReference>
<dbReference type="GO" id="GO:0016984">
    <property type="term" value="F:ribulose-bisphosphate carboxylase activity"/>
    <property type="evidence" value="ECO:0007669"/>
    <property type="project" value="UniProtKB-UniRule"/>
</dbReference>
<dbReference type="GO" id="GO:0009853">
    <property type="term" value="P:photorespiration"/>
    <property type="evidence" value="ECO:0007669"/>
    <property type="project" value="UniProtKB-KW"/>
</dbReference>
<dbReference type="GO" id="GO:0019253">
    <property type="term" value="P:reductive pentose-phosphate cycle"/>
    <property type="evidence" value="ECO:0007669"/>
    <property type="project" value="UniProtKB-UniRule"/>
</dbReference>
<dbReference type="CDD" id="cd08212">
    <property type="entry name" value="RuBisCO_large_I"/>
    <property type="match status" value="1"/>
</dbReference>
<dbReference type="FunFam" id="3.20.20.110:FF:000001">
    <property type="entry name" value="Ribulose bisphosphate carboxylase large chain"/>
    <property type="match status" value="1"/>
</dbReference>
<dbReference type="FunFam" id="3.30.70.150:FF:000001">
    <property type="entry name" value="Ribulose bisphosphate carboxylase large chain"/>
    <property type="match status" value="1"/>
</dbReference>
<dbReference type="Gene3D" id="3.20.20.110">
    <property type="entry name" value="Ribulose bisphosphate carboxylase, large subunit, C-terminal domain"/>
    <property type="match status" value="1"/>
</dbReference>
<dbReference type="Gene3D" id="3.30.70.150">
    <property type="entry name" value="RuBisCO large subunit, N-terminal domain"/>
    <property type="match status" value="1"/>
</dbReference>
<dbReference type="HAMAP" id="MF_01338">
    <property type="entry name" value="RuBisCO_L_type1"/>
    <property type="match status" value="1"/>
</dbReference>
<dbReference type="InterPro" id="IPR033966">
    <property type="entry name" value="RuBisCO"/>
</dbReference>
<dbReference type="InterPro" id="IPR020878">
    <property type="entry name" value="RuBisCo_large_chain_AS"/>
</dbReference>
<dbReference type="InterPro" id="IPR000685">
    <property type="entry name" value="RuBisCO_lsu_C"/>
</dbReference>
<dbReference type="InterPro" id="IPR036376">
    <property type="entry name" value="RuBisCO_lsu_C_sf"/>
</dbReference>
<dbReference type="InterPro" id="IPR017443">
    <property type="entry name" value="RuBisCO_lsu_fd_N"/>
</dbReference>
<dbReference type="InterPro" id="IPR036422">
    <property type="entry name" value="RuBisCO_lsu_N_sf"/>
</dbReference>
<dbReference type="InterPro" id="IPR020888">
    <property type="entry name" value="RuBisCO_lsuI"/>
</dbReference>
<dbReference type="NCBIfam" id="NF003252">
    <property type="entry name" value="PRK04208.1"/>
    <property type="match status" value="1"/>
</dbReference>
<dbReference type="PANTHER" id="PTHR42704">
    <property type="entry name" value="RIBULOSE BISPHOSPHATE CARBOXYLASE"/>
    <property type="match status" value="1"/>
</dbReference>
<dbReference type="PANTHER" id="PTHR42704:SF16">
    <property type="entry name" value="RIBULOSE BISPHOSPHATE CARBOXYLASE LARGE CHAIN"/>
    <property type="match status" value="1"/>
</dbReference>
<dbReference type="Pfam" id="PF00016">
    <property type="entry name" value="RuBisCO_large"/>
    <property type="match status" value="1"/>
</dbReference>
<dbReference type="Pfam" id="PF02788">
    <property type="entry name" value="RuBisCO_large_N"/>
    <property type="match status" value="1"/>
</dbReference>
<dbReference type="SFLD" id="SFLDG01052">
    <property type="entry name" value="RuBisCO"/>
    <property type="match status" value="1"/>
</dbReference>
<dbReference type="SFLD" id="SFLDS00014">
    <property type="entry name" value="RuBisCO"/>
    <property type="match status" value="1"/>
</dbReference>
<dbReference type="SFLD" id="SFLDG00301">
    <property type="entry name" value="RuBisCO-like_proteins"/>
    <property type="match status" value="1"/>
</dbReference>
<dbReference type="SUPFAM" id="SSF51649">
    <property type="entry name" value="RuBisCo, C-terminal domain"/>
    <property type="match status" value="1"/>
</dbReference>
<dbReference type="SUPFAM" id="SSF54966">
    <property type="entry name" value="RuBisCO, large subunit, small (N-terminal) domain"/>
    <property type="match status" value="1"/>
</dbReference>
<dbReference type="PROSITE" id="PS00157">
    <property type="entry name" value="RUBISCO_LARGE"/>
    <property type="match status" value="1"/>
</dbReference>
<gene>
    <name evidence="1" type="primary">rbcL</name>
</gene>
<organism>
    <name type="scientific">Gnetum parvifolium</name>
    <name type="common">Small-leaved jointfir</name>
    <name type="synonym">Gnetum scandens var. parvifolium</name>
    <dbReference type="NCBI Taxonomy" id="33153"/>
    <lineage>
        <taxon>Eukaryota</taxon>
        <taxon>Viridiplantae</taxon>
        <taxon>Streptophyta</taxon>
        <taxon>Embryophyta</taxon>
        <taxon>Tracheophyta</taxon>
        <taxon>Spermatophyta</taxon>
        <taxon>Gnetopsida</taxon>
        <taxon>Gnetidae</taxon>
        <taxon>Gnetales</taxon>
        <taxon>Gnetaceae</taxon>
        <taxon>Gnetum</taxon>
    </lineage>
</organism>
<sequence length="475" mass="52503">MSPKTETKASVGFQAGVKDYRLTYYTPEYQTKDTDILAAFRVTPQPGVPPEEAGAAVAAESSTGTWTTVWTDGLTSLDRYKGRCYDLEPVPGEDNLFIAYVAYPLDLFEVGSVTNMFTSIVGNVFGYKALRALRLEDLRIPPAYIKTFQGPPHGIQVERDKLNKYGRPLLGCTIKPKLGLSAKNYGRAVYECLRGGLDFTKDDENVNSQPFMRWRDRFVFCAEALNKAQAETGEIKGHYLNATAGTCEEMIKRAVFARELGVPIVMHDYLTGGFTANTSLAHYCRDNGLLLHIHRAMHAVIDRQKNHGMHFRVLAKALRLSGGDHIHGGTVVGKLEGEREITLGFVDLLRDDFVEKDRSRGIYFTQDWVSMPGVLPVASGGIHVWHMPALTEIFGDDAVLQFGGGTLGHPWGNAPGAVANRVALEACVQARNEGRDLVREGNEVIREASKWSAELAAACEVWKEIKFEFAPVDTV</sequence>
<proteinExistence type="inferred from homology"/>
<feature type="propeptide" id="PRO_0000355776" evidence="1">
    <location>
        <begin position="1"/>
        <end position="2"/>
    </location>
</feature>
<feature type="chain" id="PRO_0000355777" description="Ribulose bisphosphate carboxylase large chain">
    <location>
        <begin position="3"/>
        <end position="475"/>
    </location>
</feature>
<feature type="active site" description="Proton acceptor" evidence="1">
    <location>
        <position position="175"/>
    </location>
</feature>
<feature type="active site" description="Proton acceptor" evidence="1">
    <location>
        <position position="294"/>
    </location>
</feature>
<feature type="binding site" description="in homodimeric partner" evidence="1">
    <location>
        <position position="123"/>
    </location>
    <ligand>
        <name>substrate</name>
    </ligand>
</feature>
<feature type="binding site" evidence="1">
    <location>
        <position position="173"/>
    </location>
    <ligand>
        <name>substrate</name>
    </ligand>
</feature>
<feature type="binding site" evidence="1">
    <location>
        <position position="177"/>
    </location>
    <ligand>
        <name>substrate</name>
    </ligand>
</feature>
<feature type="binding site" description="via carbamate group" evidence="1">
    <location>
        <position position="201"/>
    </location>
    <ligand>
        <name>Mg(2+)</name>
        <dbReference type="ChEBI" id="CHEBI:18420"/>
    </ligand>
</feature>
<feature type="binding site" evidence="1">
    <location>
        <position position="203"/>
    </location>
    <ligand>
        <name>Mg(2+)</name>
        <dbReference type="ChEBI" id="CHEBI:18420"/>
    </ligand>
</feature>
<feature type="binding site" evidence="1">
    <location>
        <position position="204"/>
    </location>
    <ligand>
        <name>Mg(2+)</name>
        <dbReference type="ChEBI" id="CHEBI:18420"/>
    </ligand>
</feature>
<feature type="binding site" evidence="1">
    <location>
        <position position="295"/>
    </location>
    <ligand>
        <name>substrate</name>
    </ligand>
</feature>
<feature type="binding site" evidence="1">
    <location>
        <position position="327"/>
    </location>
    <ligand>
        <name>substrate</name>
    </ligand>
</feature>
<feature type="binding site" evidence="1">
    <location>
        <position position="379"/>
    </location>
    <ligand>
        <name>substrate</name>
    </ligand>
</feature>
<feature type="site" description="Transition state stabilizer" evidence="1">
    <location>
        <position position="334"/>
    </location>
</feature>
<feature type="modified residue" description="N-acetylproline" evidence="1">
    <location>
        <position position="3"/>
    </location>
</feature>
<feature type="modified residue" description="N6-carboxylysine" evidence="1">
    <location>
        <position position="201"/>
    </location>
</feature>
<feature type="disulfide bond" description="Interchain; in linked form" evidence="1">
    <location>
        <position position="247"/>
    </location>
</feature>
<reference key="1">
    <citation type="journal article" date="2007" name="Mol. Biol. Evol.">
        <title>Chloroplast genome (cpDNA) of Cycas taitungensis and 56 cp protein-coding genes of Gnetum parvifolium: insights into cpDNA evolution and phylogeny of extant seed plants.</title>
        <authorList>
            <person name="Wu C.-S."/>
            <person name="Wang Y.-N."/>
            <person name="Liu S.-M."/>
            <person name="Chaw S.-M."/>
        </authorList>
    </citation>
    <scope>NUCLEOTIDE SEQUENCE [LARGE SCALE GENOMIC DNA]</scope>
</reference>
<reference key="2">
    <citation type="journal article" date="2009" name="Mol. Phylogenet. Evol.">
        <title>Evolution of reduced and compact chloroplast genomes (cpDNAs) in gnetophytes: Selection toward a lower-cost strategy.</title>
        <authorList>
            <person name="Wu C.-S."/>
            <person name="Lai Y.-T."/>
            <person name="Lin C.-P."/>
            <person name="Wang Y.-N."/>
            <person name="Chaw S.-M."/>
        </authorList>
    </citation>
    <scope>NUCLEOTIDE SEQUENCE [LARGE SCALE GENOMIC DNA]</scope>
</reference>
<name>RBL_GNEPA</name>
<keyword id="KW-0007">Acetylation</keyword>
<keyword id="KW-0113">Calvin cycle</keyword>
<keyword id="KW-0120">Carbon dioxide fixation</keyword>
<keyword id="KW-0150">Chloroplast</keyword>
<keyword id="KW-1015">Disulfide bond</keyword>
<keyword id="KW-0456">Lyase</keyword>
<keyword id="KW-0460">Magnesium</keyword>
<keyword id="KW-0479">Metal-binding</keyword>
<keyword id="KW-0503">Monooxygenase</keyword>
<keyword id="KW-0560">Oxidoreductase</keyword>
<keyword id="KW-0601">Photorespiration</keyword>
<keyword id="KW-0602">Photosynthesis</keyword>
<keyword id="KW-0934">Plastid</keyword>
<accession>A6BM42</accession>
<accession>B7ZIA5</accession>
<evidence type="ECO:0000255" key="1">
    <source>
        <dbReference type="HAMAP-Rule" id="MF_01338"/>
    </source>
</evidence>
<geneLocation type="chloroplast"/>
<comment type="function">
    <text evidence="1">RuBisCO catalyzes two reactions: the carboxylation of D-ribulose 1,5-bisphosphate, the primary event in carbon dioxide fixation, as well as the oxidative fragmentation of the pentose substrate in the photorespiration process. Both reactions occur simultaneously and in competition at the same active site.</text>
</comment>
<comment type="catalytic activity">
    <reaction evidence="1">
        <text>2 (2R)-3-phosphoglycerate + 2 H(+) = D-ribulose 1,5-bisphosphate + CO2 + H2O</text>
        <dbReference type="Rhea" id="RHEA:23124"/>
        <dbReference type="ChEBI" id="CHEBI:15377"/>
        <dbReference type="ChEBI" id="CHEBI:15378"/>
        <dbReference type="ChEBI" id="CHEBI:16526"/>
        <dbReference type="ChEBI" id="CHEBI:57870"/>
        <dbReference type="ChEBI" id="CHEBI:58272"/>
        <dbReference type="EC" id="4.1.1.39"/>
    </reaction>
</comment>
<comment type="catalytic activity">
    <reaction evidence="1">
        <text>D-ribulose 1,5-bisphosphate + O2 = 2-phosphoglycolate + (2R)-3-phosphoglycerate + 2 H(+)</text>
        <dbReference type="Rhea" id="RHEA:36631"/>
        <dbReference type="ChEBI" id="CHEBI:15378"/>
        <dbReference type="ChEBI" id="CHEBI:15379"/>
        <dbReference type="ChEBI" id="CHEBI:57870"/>
        <dbReference type="ChEBI" id="CHEBI:58033"/>
        <dbReference type="ChEBI" id="CHEBI:58272"/>
    </reaction>
</comment>
<comment type="cofactor">
    <cofactor evidence="1">
        <name>Mg(2+)</name>
        <dbReference type="ChEBI" id="CHEBI:18420"/>
    </cofactor>
    <text evidence="1">Binds 1 Mg(2+) ion per subunit.</text>
</comment>
<comment type="subunit">
    <text evidence="1">Heterohexadecamer of 8 large chains and 8 small chains; disulfide-linked. The disulfide link is formed within the large subunit homodimers.</text>
</comment>
<comment type="subcellular location">
    <subcellularLocation>
        <location>Plastid</location>
        <location>Chloroplast</location>
    </subcellularLocation>
</comment>
<comment type="PTM">
    <text evidence="1">The disulfide bond which can form in the large chain dimeric partners within the hexadecamer appears to be associated with oxidative stress and protein turnover.</text>
</comment>
<comment type="miscellaneous">
    <text evidence="1">The basic functional RuBisCO is composed of a large chain homodimer in a 'head-to-tail' conformation. In form I RuBisCO this homodimer is arranged in a barrel-like tetramer with the small subunits forming a tetrameric 'cap' on each end of the 'barrel'.</text>
</comment>
<comment type="similarity">
    <text evidence="1">Belongs to the RuBisCO large chain family. Type I subfamily.</text>
</comment>